<reference key="1">
    <citation type="journal article" date="2005" name="Science">
        <title>The transcriptional landscape of the mammalian genome.</title>
        <authorList>
            <person name="Carninci P."/>
            <person name="Kasukawa T."/>
            <person name="Katayama S."/>
            <person name="Gough J."/>
            <person name="Frith M.C."/>
            <person name="Maeda N."/>
            <person name="Oyama R."/>
            <person name="Ravasi T."/>
            <person name="Lenhard B."/>
            <person name="Wells C."/>
            <person name="Kodzius R."/>
            <person name="Shimokawa K."/>
            <person name="Bajic V.B."/>
            <person name="Brenner S.E."/>
            <person name="Batalov S."/>
            <person name="Forrest A.R."/>
            <person name="Zavolan M."/>
            <person name="Davis M.J."/>
            <person name="Wilming L.G."/>
            <person name="Aidinis V."/>
            <person name="Allen J.E."/>
            <person name="Ambesi-Impiombato A."/>
            <person name="Apweiler R."/>
            <person name="Aturaliya R.N."/>
            <person name="Bailey T.L."/>
            <person name="Bansal M."/>
            <person name="Baxter L."/>
            <person name="Beisel K.W."/>
            <person name="Bersano T."/>
            <person name="Bono H."/>
            <person name="Chalk A.M."/>
            <person name="Chiu K.P."/>
            <person name="Choudhary V."/>
            <person name="Christoffels A."/>
            <person name="Clutterbuck D.R."/>
            <person name="Crowe M.L."/>
            <person name="Dalla E."/>
            <person name="Dalrymple B.P."/>
            <person name="de Bono B."/>
            <person name="Della Gatta G."/>
            <person name="di Bernardo D."/>
            <person name="Down T."/>
            <person name="Engstrom P."/>
            <person name="Fagiolini M."/>
            <person name="Faulkner G."/>
            <person name="Fletcher C.F."/>
            <person name="Fukushima T."/>
            <person name="Furuno M."/>
            <person name="Futaki S."/>
            <person name="Gariboldi M."/>
            <person name="Georgii-Hemming P."/>
            <person name="Gingeras T.R."/>
            <person name="Gojobori T."/>
            <person name="Green R.E."/>
            <person name="Gustincich S."/>
            <person name="Harbers M."/>
            <person name="Hayashi Y."/>
            <person name="Hensch T.K."/>
            <person name="Hirokawa N."/>
            <person name="Hill D."/>
            <person name="Huminiecki L."/>
            <person name="Iacono M."/>
            <person name="Ikeo K."/>
            <person name="Iwama A."/>
            <person name="Ishikawa T."/>
            <person name="Jakt M."/>
            <person name="Kanapin A."/>
            <person name="Katoh M."/>
            <person name="Kawasawa Y."/>
            <person name="Kelso J."/>
            <person name="Kitamura H."/>
            <person name="Kitano H."/>
            <person name="Kollias G."/>
            <person name="Krishnan S.P."/>
            <person name="Kruger A."/>
            <person name="Kummerfeld S.K."/>
            <person name="Kurochkin I.V."/>
            <person name="Lareau L.F."/>
            <person name="Lazarevic D."/>
            <person name="Lipovich L."/>
            <person name="Liu J."/>
            <person name="Liuni S."/>
            <person name="McWilliam S."/>
            <person name="Madan Babu M."/>
            <person name="Madera M."/>
            <person name="Marchionni L."/>
            <person name="Matsuda H."/>
            <person name="Matsuzawa S."/>
            <person name="Miki H."/>
            <person name="Mignone F."/>
            <person name="Miyake S."/>
            <person name="Morris K."/>
            <person name="Mottagui-Tabar S."/>
            <person name="Mulder N."/>
            <person name="Nakano N."/>
            <person name="Nakauchi H."/>
            <person name="Ng P."/>
            <person name="Nilsson R."/>
            <person name="Nishiguchi S."/>
            <person name="Nishikawa S."/>
            <person name="Nori F."/>
            <person name="Ohara O."/>
            <person name="Okazaki Y."/>
            <person name="Orlando V."/>
            <person name="Pang K.C."/>
            <person name="Pavan W.J."/>
            <person name="Pavesi G."/>
            <person name="Pesole G."/>
            <person name="Petrovsky N."/>
            <person name="Piazza S."/>
            <person name="Reed J."/>
            <person name="Reid J.F."/>
            <person name="Ring B.Z."/>
            <person name="Ringwald M."/>
            <person name="Rost B."/>
            <person name="Ruan Y."/>
            <person name="Salzberg S.L."/>
            <person name="Sandelin A."/>
            <person name="Schneider C."/>
            <person name="Schoenbach C."/>
            <person name="Sekiguchi K."/>
            <person name="Semple C.A."/>
            <person name="Seno S."/>
            <person name="Sessa L."/>
            <person name="Sheng Y."/>
            <person name="Shibata Y."/>
            <person name="Shimada H."/>
            <person name="Shimada K."/>
            <person name="Silva D."/>
            <person name="Sinclair B."/>
            <person name="Sperling S."/>
            <person name="Stupka E."/>
            <person name="Sugiura K."/>
            <person name="Sultana R."/>
            <person name="Takenaka Y."/>
            <person name="Taki K."/>
            <person name="Tammoja K."/>
            <person name="Tan S.L."/>
            <person name="Tang S."/>
            <person name="Taylor M.S."/>
            <person name="Tegner J."/>
            <person name="Teichmann S.A."/>
            <person name="Ueda H.R."/>
            <person name="van Nimwegen E."/>
            <person name="Verardo R."/>
            <person name="Wei C.L."/>
            <person name="Yagi K."/>
            <person name="Yamanishi H."/>
            <person name="Zabarovsky E."/>
            <person name="Zhu S."/>
            <person name="Zimmer A."/>
            <person name="Hide W."/>
            <person name="Bult C."/>
            <person name="Grimmond S.M."/>
            <person name="Teasdale R.D."/>
            <person name="Liu E.T."/>
            <person name="Brusic V."/>
            <person name="Quackenbush J."/>
            <person name="Wahlestedt C."/>
            <person name="Mattick J.S."/>
            <person name="Hume D.A."/>
            <person name="Kai C."/>
            <person name="Sasaki D."/>
            <person name="Tomaru Y."/>
            <person name="Fukuda S."/>
            <person name="Kanamori-Katayama M."/>
            <person name="Suzuki M."/>
            <person name="Aoki J."/>
            <person name="Arakawa T."/>
            <person name="Iida J."/>
            <person name="Imamura K."/>
            <person name="Itoh M."/>
            <person name="Kato T."/>
            <person name="Kawaji H."/>
            <person name="Kawagashira N."/>
            <person name="Kawashima T."/>
            <person name="Kojima M."/>
            <person name="Kondo S."/>
            <person name="Konno H."/>
            <person name="Nakano K."/>
            <person name="Ninomiya N."/>
            <person name="Nishio T."/>
            <person name="Okada M."/>
            <person name="Plessy C."/>
            <person name="Shibata K."/>
            <person name="Shiraki T."/>
            <person name="Suzuki S."/>
            <person name="Tagami M."/>
            <person name="Waki K."/>
            <person name="Watahiki A."/>
            <person name="Okamura-Oho Y."/>
            <person name="Suzuki H."/>
            <person name="Kawai J."/>
            <person name="Hayashizaki Y."/>
        </authorList>
    </citation>
    <scope>NUCLEOTIDE SEQUENCE [LARGE SCALE MRNA]</scope>
    <source>
        <strain>C57BL/6J</strain>
        <tissue>Skin</tissue>
    </source>
</reference>
<reference key="2">
    <citation type="journal article" date="2004" name="Genome Res.">
        <title>The status, quality, and expansion of the NIH full-length cDNA project: the Mammalian Gene Collection (MGC).</title>
        <authorList>
            <consortium name="The MGC Project Team"/>
        </authorList>
    </citation>
    <scope>NUCLEOTIDE SEQUENCE [LARGE SCALE MRNA]</scope>
    <source>
        <strain>C57BL/6J</strain>
        <tissue>Brain</tissue>
        <tissue>Olfactory epithelium</tissue>
    </source>
</reference>
<reference key="3">
    <citation type="journal article" date="2002" name="Gene">
        <title>Ermelin, an endoplasmic reticulum transmembrane protein, contains the novel HELP domain conserved in eukaryotes.</title>
        <authorList>
            <person name="Suzuki A."/>
            <person name="Endo T."/>
        </authorList>
    </citation>
    <scope>NUCLEOTIDE SEQUENCE [MRNA] OF 21-765</scope>
    <scope>TISSUE SPECIFICITY</scope>
    <scope>INDUCTION</scope>
</reference>
<reference key="4">
    <citation type="journal article" date="2009" name="Immunity">
        <title>The phagosomal proteome in interferon-gamma-activated macrophages.</title>
        <authorList>
            <person name="Trost M."/>
            <person name="English L."/>
            <person name="Lemieux S."/>
            <person name="Courcelles M."/>
            <person name="Desjardins M."/>
            <person name="Thibault P."/>
        </authorList>
    </citation>
    <scope>IDENTIFICATION BY MASS SPECTROMETRY [LARGE SCALE ANALYSIS]</scope>
</reference>
<reference key="5">
    <citation type="journal article" date="2009" name="Nat. Biotechnol.">
        <title>Mass-spectrometric identification and relative quantification of N-linked cell surface glycoproteins.</title>
        <authorList>
            <person name="Wollscheid B."/>
            <person name="Bausch-Fluck D."/>
            <person name="Henderson C."/>
            <person name="O'Brien R."/>
            <person name="Bibel M."/>
            <person name="Schiess R."/>
            <person name="Aebersold R."/>
            <person name="Watts J.D."/>
        </authorList>
    </citation>
    <scope>GLYCOSYLATION [LARGE SCALE ANALYSIS] AT ASN-68 AND ASN-275</scope>
</reference>
<reference key="6">
    <citation type="journal article" date="2010" name="Cell">
        <title>A tissue-specific atlas of mouse protein phosphorylation and expression.</title>
        <authorList>
            <person name="Huttlin E.L."/>
            <person name="Jedrychowski M.P."/>
            <person name="Elias J.E."/>
            <person name="Goswami T."/>
            <person name="Rad R."/>
            <person name="Beausoleil S.A."/>
            <person name="Villen J."/>
            <person name="Haas W."/>
            <person name="Sowa M.E."/>
            <person name="Gygi S.P."/>
        </authorList>
    </citation>
    <scope>IDENTIFICATION BY MASS SPECTROMETRY [LARGE SCALE ANALYSIS]</scope>
    <source>
        <tissue>Brain</tissue>
        <tissue>Kidney</tissue>
    </source>
</reference>
<reference key="7">
    <citation type="journal article" date="2014" name="Mol. Hum. Reprod.">
        <title>Maternally-derived zinc transporters ZIP6 and ZIP10 drive the mammalian oocyte-to-egg transition.</title>
        <authorList>
            <person name="Kong B.Y."/>
            <person name="Duncan F.E."/>
            <person name="Que E.L."/>
            <person name="Kim A.M."/>
            <person name="O'Halloran T.V."/>
            <person name="Woodruff T.K."/>
        </authorList>
    </citation>
    <scope>FUNCTION</scope>
    <scope>SUBCELLULAR LOCATION</scope>
    <scope>DEVELOPMENTAL STAGE</scope>
</reference>
<reference key="8">
    <citation type="journal article" date="2017" name="Sci. Rep.">
        <title>A ZIP6-ZIP10 heteromer controls NCAM1 phosphorylation and integration into focal adhesion complexes during epithelial-to-mesenchymal transition.</title>
        <authorList>
            <person name="Brethour D."/>
            <person name="Mehrabian M."/>
            <person name="Williams D."/>
            <person name="Wang X."/>
            <person name="Ghodrati F."/>
            <person name="Ehsani S."/>
            <person name="Rubie E.A."/>
            <person name="Woodgett J.R."/>
            <person name="Sevalle J."/>
            <person name="Xi Z."/>
            <person name="Rogaeva E."/>
            <person name="Schmitt-Ulms G."/>
        </authorList>
    </citation>
    <scope>FUNCTION</scope>
    <scope>INDUCTION</scope>
    <scope>IDENTIFICATION IN A COMPLEX WITH SLC39A10 AND NCAM1</scope>
    <scope>IDENTIFICATION IN A COMPLEX WITH SLC39A10 AND GSK3B</scope>
</reference>
<evidence type="ECO:0000250" key="1">
    <source>
        <dbReference type="UniProtKB" id="Q13433"/>
    </source>
</evidence>
<evidence type="ECO:0000250" key="2">
    <source>
        <dbReference type="UniProtKB" id="Q4V887"/>
    </source>
</evidence>
<evidence type="ECO:0000250" key="3">
    <source>
        <dbReference type="UniProtKB" id="Q6L8F3"/>
    </source>
</evidence>
<evidence type="ECO:0000255" key="4"/>
<evidence type="ECO:0000256" key="5">
    <source>
        <dbReference type="SAM" id="MobiDB-lite"/>
    </source>
</evidence>
<evidence type="ECO:0000269" key="6">
    <source>
    </source>
</evidence>
<evidence type="ECO:0000269" key="7">
    <source>
    </source>
</evidence>
<evidence type="ECO:0000269" key="8">
    <source>
    </source>
</evidence>
<evidence type="ECO:0000269" key="9">
    <source>
    </source>
</evidence>
<evidence type="ECO:0000303" key="10">
    <source>
    </source>
</evidence>
<evidence type="ECO:0000305" key="11"/>
<evidence type="ECO:0000312" key="12">
    <source>
        <dbReference type="MGI" id="MGI:2147279"/>
    </source>
</evidence>
<name>S39A6_MOUSE</name>
<gene>
    <name evidence="12" type="primary">Slc39a6</name>
    <name type="synonym">Zip6</name>
</gene>
<feature type="signal peptide" evidence="4">
    <location>
        <begin position="1"/>
        <end position="20"/>
    </location>
</feature>
<feature type="chain" id="PRO_0000041651" description="Zinc transporter ZIP6">
    <location>
        <begin position="21"/>
        <end position="765"/>
    </location>
</feature>
<feature type="topological domain" description="Extracellular" evidence="1">
    <location>
        <begin position="21"/>
        <end position="335"/>
    </location>
</feature>
<feature type="transmembrane region" description="Helical; Name=1" evidence="4">
    <location>
        <begin position="336"/>
        <end position="356"/>
    </location>
</feature>
<feature type="topological domain" description="Cytoplasmic" evidence="4">
    <location>
        <begin position="357"/>
        <end position="365"/>
    </location>
</feature>
<feature type="transmembrane region" description="Helical; Name=2" evidence="4">
    <location>
        <begin position="366"/>
        <end position="386"/>
    </location>
</feature>
<feature type="topological domain" description="Extracellular" evidence="4">
    <location>
        <begin position="387"/>
        <end position="433"/>
    </location>
</feature>
<feature type="transmembrane region" description="Helical; Name=3" evidence="4">
    <location>
        <begin position="434"/>
        <end position="454"/>
    </location>
</feature>
<feature type="topological domain" description="Cytoplasmic" evidence="4">
    <location>
        <begin position="455"/>
        <end position="667"/>
    </location>
</feature>
<feature type="transmembrane region" description="Helical; Name=4" evidence="4">
    <location>
        <begin position="668"/>
        <end position="688"/>
    </location>
</feature>
<feature type="topological domain" description="Extracellular" evidence="4">
    <location>
        <begin position="689"/>
        <end position="696"/>
    </location>
</feature>
<feature type="transmembrane region" description="Helical; Name=5" evidence="4">
    <location>
        <begin position="697"/>
        <end position="717"/>
    </location>
</feature>
<feature type="topological domain" description="Cytoplasmic" evidence="4">
    <location>
        <begin position="718"/>
        <end position="734"/>
    </location>
</feature>
<feature type="transmembrane region" description="Helical; Name=6" evidence="4">
    <location>
        <begin position="735"/>
        <end position="755"/>
    </location>
</feature>
<feature type="topological domain" description="Extracellular" evidence="1">
    <location>
        <begin position="756"/>
        <end position="765"/>
    </location>
</feature>
<feature type="region of interest" description="Disordered" evidence="5">
    <location>
        <begin position="96"/>
        <end position="196"/>
    </location>
</feature>
<feature type="region of interest" description="Disordered" evidence="5">
    <location>
        <begin position="209"/>
        <end position="257"/>
    </location>
</feature>
<feature type="region of interest" description="Disordered" evidence="5">
    <location>
        <begin position="458"/>
        <end position="519"/>
    </location>
</feature>
<feature type="coiled-coil region" evidence="4">
    <location>
        <begin position="475"/>
        <end position="495"/>
    </location>
</feature>
<feature type="compositionally biased region" description="Basic and acidic residues" evidence="5">
    <location>
        <begin position="96"/>
        <end position="135"/>
    </location>
</feature>
<feature type="compositionally biased region" description="Basic and acidic residues" evidence="5">
    <location>
        <begin position="174"/>
        <end position="186"/>
    </location>
</feature>
<feature type="compositionally biased region" description="Low complexity" evidence="5">
    <location>
        <begin position="187"/>
        <end position="196"/>
    </location>
</feature>
<feature type="compositionally biased region" description="Polar residues" evidence="5">
    <location>
        <begin position="224"/>
        <end position="233"/>
    </location>
</feature>
<feature type="compositionally biased region" description="Basic residues" evidence="5">
    <location>
        <begin position="238"/>
        <end position="247"/>
    </location>
</feature>
<feature type="compositionally biased region" description="Basic and acidic residues" evidence="5">
    <location>
        <begin position="248"/>
        <end position="257"/>
    </location>
</feature>
<feature type="compositionally biased region" description="Basic and acidic residues" evidence="5">
    <location>
        <begin position="490"/>
        <end position="508"/>
    </location>
</feature>
<feature type="compositionally biased region" description="Polar residues" evidence="5">
    <location>
        <begin position="509"/>
        <end position="519"/>
    </location>
</feature>
<feature type="modified residue" description="Phosphoserine" evidence="1">
    <location>
        <position position="481"/>
    </location>
</feature>
<feature type="modified residue" description="Phosphoserine" evidence="1">
    <location>
        <position position="488"/>
    </location>
</feature>
<feature type="glycosylation site" description="N-linked (GlcNAc...) asparagine" evidence="7">
    <location>
        <position position="68"/>
    </location>
</feature>
<feature type="glycosylation site" description="N-linked (GlcNAc...) asparagine" evidence="4">
    <location>
        <position position="250"/>
    </location>
</feature>
<feature type="glycosylation site" description="N-linked (GlcNAc...) asparagine" evidence="7">
    <location>
        <position position="275"/>
    </location>
</feature>
<feature type="glycosylation site" description="N-linked (GlcNAc...) asparagine" evidence="4">
    <location>
        <position position="292"/>
    </location>
</feature>
<feature type="glycosylation site" description="N-linked (GlcNAc...) asparagine" evidence="4">
    <location>
        <position position="694"/>
    </location>
</feature>
<feature type="sequence conflict" description="In Ref. 3; BAB86300." evidence="11" ref="3">
    <location>
        <begin position="102"/>
        <end position="107"/>
    </location>
</feature>
<feature type="sequence conflict" description="In Ref. 2; AAH55012." evidence="11" ref="2">
    <original>A</original>
    <variation>V</variation>
    <location>
        <position position="201"/>
    </location>
</feature>
<dbReference type="EMBL" id="AK028976">
    <property type="protein sequence ID" value="BAC26223.1"/>
    <property type="molecule type" value="mRNA"/>
</dbReference>
<dbReference type="EMBL" id="BC054780">
    <property type="protein sequence ID" value="AAH54780.2"/>
    <property type="status" value="ALT_INIT"/>
    <property type="molecule type" value="mRNA"/>
</dbReference>
<dbReference type="EMBL" id="BC055012">
    <property type="protein sequence ID" value="AAH55012.1"/>
    <property type="molecule type" value="mRNA"/>
</dbReference>
<dbReference type="EMBL" id="AB071697">
    <property type="protein sequence ID" value="BAB86300.1"/>
    <property type="status" value="ALT_FRAME"/>
    <property type="molecule type" value="mRNA"/>
</dbReference>
<dbReference type="CCDS" id="CCDS50239.1"/>
<dbReference type="RefSeq" id="NP_631882.2">
    <property type="nucleotide sequence ID" value="NM_139143.3"/>
</dbReference>
<dbReference type="BioGRID" id="223167">
    <property type="interactions" value="6"/>
</dbReference>
<dbReference type="FunCoup" id="Q8C145">
    <property type="interactions" value="2592"/>
</dbReference>
<dbReference type="STRING" id="10090.ENSMUSP00000064667"/>
<dbReference type="GlyConnect" id="2833">
    <property type="glycosylation" value="2 N-Linked glycans (2 sites)"/>
</dbReference>
<dbReference type="GlyCosmos" id="Q8C145">
    <property type="glycosylation" value="5 sites, 2 glycans"/>
</dbReference>
<dbReference type="GlyGen" id="Q8C145">
    <property type="glycosylation" value="5 sites, 5 N-linked glycans (4 sites)"/>
</dbReference>
<dbReference type="iPTMnet" id="Q8C145"/>
<dbReference type="PhosphoSitePlus" id="Q8C145"/>
<dbReference type="SwissPalm" id="Q8C145"/>
<dbReference type="jPOST" id="Q8C145"/>
<dbReference type="PaxDb" id="10090-ENSMUSP00000064667"/>
<dbReference type="PeptideAtlas" id="Q8C145"/>
<dbReference type="ProteomicsDB" id="256684"/>
<dbReference type="Pumba" id="Q8C145"/>
<dbReference type="Antibodypedia" id="5245">
    <property type="antibodies" value="294 antibodies from 37 providers"/>
</dbReference>
<dbReference type="DNASU" id="106957"/>
<dbReference type="Ensembl" id="ENSMUST00000070726.10">
    <property type="protein sequence ID" value="ENSMUSP00000064667.4"/>
    <property type="gene ID" value="ENSMUSG00000024270.12"/>
</dbReference>
<dbReference type="GeneID" id="106957"/>
<dbReference type="KEGG" id="mmu:106957"/>
<dbReference type="UCSC" id="uc008egv.1">
    <property type="organism name" value="mouse"/>
</dbReference>
<dbReference type="AGR" id="MGI:2147279"/>
<dbReference type="CTD" id="25800"/>
<dbReference type="MGI" id="MGI:2147279">
    <property type="gene designation" value="Slc39a6"/>
</dbReference>
<dbReference type="VEuPathDB" id="HostDB:ENSMUSG00000024270"/>
<dbReference type="eggNOG" id="KOG2693">
    <property type="taxonomic scope" value="Eukaryota"/>
</dbReference>
<dbReference type="GeneTree" id="ENSGT00940000156387"/>
<dbReference type="HOGENOM" id="CLU_015114_13_2_1"/>
<dbReference type="InParanoid" id="Q8C145"/>
<dbReference type="OMA" id="LLMSHGM"/>
<dbReference type="OrthoDB" id="200954at2759"/>
<dbReference type="PhylomeDB" id="Q8C145"/>
<dbReference type="TreeFam" id="TF318470"/>
<dbReference type="Reactome" id="R-MMU-442380">
    <property type="pathway name" value="Zinc influx into cells by the SLC39 gene family"/>
</dbReference>
<dbReference type="BioGRID-ORCS" id="106957">
    <property type="hits" value="6 hits in 79 CRISPR screens"/>
</dbReference>
<dbReference type="ChiTaRS" id="Slc39a6">
    <property type="organism name" value="mouse"/>
</dbReference>
<dbReference type="PRO" id="PR:Q8C145"/>
<dbReference type="Proteomes" id="UP000000589">
    <property type="component" value="Chromosome 18"/>
</dbReference>
<dbReference type="RNAct" id="Q8C145">
    <property type="molecule type" value="protein"/>
</dbReference>
<dbReference type="Bgee" id="ENSMUSG00000024270">
    <property type="expression patterns" value="Expressed in hair follicle and 249 other cell types or tissues"/>
</dbReference>
<dbReference type="ExpressionAtlas" id="Q8C145">
    <property type="expression patterns" value="baseline and differential"/>
</dbReference>
<dbReference type="GO" id="GO:0016324">
    <property type="term" value="C:apical plasma membrane"/>
    <property type="evidence" value="ECO:0000250"/>
    <property type="project" value="UniProtKB"/>
</dbReference>
<dbReference type="GO" id="GO:0005783">
    <property type="term" value="C:endoplasmic reticulum"/>
    <property type="evidence" value="ECO:0000314"/>
    <property type="project" value="MGI"/>
</dbReference>
<dbReference type="GO" id="GO:0031258">
    <property type="term" value="C:lamellipodium membrane"/>
    <property type="evidence" value="ECO:0000250"/>
    <property type="project" value="UniProtKB"/>
</dbReference>
<dbReference type="GO" id="GO:0045121">
    <property type="term" value="C:membrane raft"/>
    <property type="evidence" value="ECO:0000250"/>
    <property type="project" value="UniProtKB"/>
</dbReference>
<dbReference type="GO" id="GO:0005886">
    <property type="term" value="C:plasma membrane"/>
    <property type="evidence" value="ECO:0000250"/>
    <property type="project" value="UniProtKB"/>
</dbReference>
<dbReference type="GO" id="GO:0005385">
    <property type="term" value="F:zinc ion transmembrane transporter activity"/>
    <property type="evidence" value="ECO:0000250"/>
    <property type="project" value="UniProtKB"/>
</dbReference>
<dbReference type="GO" id="GO:0001837">
    <property type="term" value="P:epithelial to mesenchymal transition"/>
    <property type="evidence" value="ECO:0000314"/>
    <property type="project" value="UniProtKB"/>
</dbReference>
<dbReference type="GO" id="GO:0006882">
    <property type="term" value="P:intracellular zinc ion homeostasis"/>
    <property type="evidence" value="ECO:0007669"/>
    <property type="project" value="Ensembl"/>
</dbReference>
<dbReference type="GO" id="GO:0046649">
    <property type="term" value="P:lymphocyte activation"/>
    <property type="evidence" value="ECO:0000250"/>
    <property type="project" value="UniProtKB"/>
</dbReference>
<dbReference type="GO" id="GO:0050852">
    <property type="term" value="P:T cell receptor signaling pathway"/>
    <property type="evidence" value="ECO:0000250"/>
    <property type="project" value="UniProtKB"/>
</dbReference>
<dbReference type="GO" id="GO:0071578">
    <property type="term" value="P:zinc ion import across plasma membrane"/>
    <property type="evidence" value="ECO:0000250"/>
    <property type="project" value="UniProtKB"/>
</dbReference>
<dbReference type="GO" id="GO:0071577">
    <property type="term" value="P:zinc ion transmembrane transport"/>
    <property type="evidence" value="ECO:0000250"/>
    <property type="project" value="UniProtKB"/>
</dbReference>
<dbReference type="InterPro" id="IPR003689">
    <property type="entry name" value="ZIP"/>
</dbReference>
<dbReference type="InterPro" id="IPR050799">
    <property type="entry name" value="ZIP_Transporter"/>
</dbReference>
<dbReference type="PANTHER" id="PTHR12191">
    <property type="entry name" value="SOLUTE CARRIER FAMILY 39"/>
    <property type="match status" value="1"/>
</dbReference>
<dbReference type="PANTHER" id="PTHR12191:SF22">
    <property type="entry name" value="ZINC TRANSPORTER ZIP6"/>
    <property type="match status" value="1"/>
</dbReference>
<dbReference type="Pfam" id="PF02535">
    <property type="entry name" value="Zip"/>
    <property type="match status" value="1"/>
</dbReference>
<organism>
    <name type="scientific">Mus musculus</name>
    <name type="common">Mouse</name>
    <dbReference type="NCBI Taxonomy" id="10090"/>
    <lineage>
        <taxon>Eukaryota</taxon>
        <taxon>Metazoa</taxon>
        <taxon>Chordata</taxon>
        <taxon>Craniata</taxon>
        <taxon>Vertebrata</taxon>
        <taxon>Euteleostomi</taxon>
        <taxon>Mammalia</taxon>
        <taxon>Eutheria</taxon>
        <taxon>Euarchontoglires</taxon>
        <taxon>Glires</taxon>
        <taxon>Rodentia</taxon>
        <taxon>Myomorpha</taxon>
        <taxon>Muroidea</taxon>
        <taxon>Muridae</taxon>
        <taxon>Murinae</taxon>
        <taxon>Mus</taxon>
        <taxon>Mus</taxon>
    </lineage>
</organism>
<protein>
    <recommendedName>
        <fullName evidence="11">Zinc transporter ZIP6</fullName>
    </recommendedName>
    <alternativeName>
        <fullName>Endoplasmic reticulum membrane-linked protein</fullName>
        <shortName evidence="10">Ermelin</shortName>
    </alternativeName>
    <alternativeName>
        <fullName>Solute carrier family 39 member 6</fullName>
    </alternativeName>
    <alternativeName>
        <fullName>Zrt- and Irt-like protein 6</fullName>
        <shortName>ZIP-6</shortName>
    </alternativeName>
</protein>
<comment type="function">
    <text evidence="1 3 8 9">Zinc-influx transporter which plays a role in zinc homeostasis and in the induction of epithelial-to-mesenchymal transition (EMT) (PubMed:28098160). When associated with SLC39A10, the heterodimer formed by SLC39A10 and SLC39A6 mediates cellular zinc uptake to trigger cells to undergo epithelial- to-mesenchymal transition (EMT) (By similarity). The SLC39A10-SLC39A6 heterodimer also controls NCAM1 phosphorylation and its integration into focal adhesion complexes during EMT (PubMed:28098160). Zinc influx inactivates GSK3B, enabling unphosphorylated SNAI1 in the nucleus to down-regulate adherence genes such as E-cadherin, causing loss of cell adherence (By similarity). In addition, the SLC39A10-SLC39A6 heterodimer plays an essentiel role in initiating mitosis by importing zinc into cells to initiate a pathway resulting in the onset of mitosis (By similarity). Participates in the T-cell receptor signaling regulation by mediating cellular zinc uptake into activated lymphocytes (By similarity). Regulates the zinc influx necessary for proper meiotic progression to metaphase II (MII) that allows the oocyte-to-egg transition (PubMed:25143461).</text>
</comment>
<comment type="catalytic activity">
    <reaction evidence="1">
        <text>Zn(2+)(in) = Zn(2+)(out)</text>
        <dbReference type="Rhea" id="RHEA:29351"/>
        <dbReference type="ChEBI" id="CHEBI:29105"/>
    </reaction>
</comment>
<comment type="subunit">
    <text evidence="1 9">Interacts with SLC39A10; which triggers cells to undergo EMT and mitosis. Found in a complex with SLC39A6, SLC39A10 and with the 'Ser-727' phosphorylated form of STAT3 throughout mitosis (By similarity). Found in a complex with SLC39A6, SLC39A10 and with NCAM1; this complex controls NCAM1 phosphorylation and integration into focal adhesion complexes during epithelial-to-mesenchymal transition (EMT) (PubMed:28098160). Found in a complex with SLC39A6, SLC39A10 and with GSK3B that controls NCAM1 phosphorylation (PubMed:28098160).</text>
</comment>
<comment type="subcellular location">
    <subcellularLocation>
        <location evidence="8">Cell membrane</location>
        <topology evidence="1">Multi-pass membrane protein</topology>
    </subcellularLocation>
    <subcellularLocation>
        <location evidence="1">Cell projection</location>
        <location evidence="1">Lamellipodium membrane</location>
        <topology evidence="1">Multi-pass membrane protein</topology>
    </subcellularLocation>
    <subcellularLocation>
        <location evidence="1">Membrane raft</location>
        <topology evidence="4">Multi-pass membrane protein</topology>
    </subcellularLocation>
    <subcellularLocation>
        <location evidence="2">Apical cell membrane</location>
    </subcellularLocation>
    <text evidence="1 2">Localizes to lipid rafts in T cells and is recruited into the immunological synapse in response to TCR stimulation (By similarity). In the choroid plexus is limited to the apical membrane in epithelial cells (By similarity).</text>
</comment>
<comment type="tissue specificity">
    <text evidence="6">Highly expressed in the brain and testis. In the brain strongly expressed in the CA1 and CA3 regions, Purkinje cells in cerebellum and dentate gyrus in hippocampus. In testis found in spermatids or mature sperms in the central areas of seminiferous tubules.</text>
</comment>
<comment type="developmental stage">
    <text evidence="8">Highly expressed in the oocyte and egg but decreased and remained low after fertilization (PubMed:25143461). During preimplantation embryos, localizes to the cortex (PubMed:25143461).</text>
</comment>
<comment type="induction">
    <text evidence="6 9">Induced during neuronal differentiation neuroblastoma cells line but down-regulated during myogenic differentiation of skeletal muscle cells line (PubMed:11891044). Induced during epithelialto-mesenchymal transition (EMT) (PubMed:28098160).</text>
</comment>
<comment type="PTM">
    <text evidence="1">Cleaved on the N-terminus before locating to the plasma membrane.</text>
</comment>
<comment type="PTM">
    <text evidence="1">N-glycosylated.</text>
</comment>
<comment type="PTM">
    <text evidence="1">Phosphorylated by ZAP70 in response to TCR stimulation leading to its activation.</text>
</comment>
<comment type="similarity">
    <text evidence="11">Belongs to the ZIP transporter (TC 2.A.5) family.</text>
</comment>
<comment type="sequence caution" evidence="11">
    <conflict type="erroneous initiation">
        <sequence resource="EMBL-CDS" id="AAH54780"/>
    </conflict>
    <text>Truncated N-terminus.</text>
</comment>
<comment type="sequence caution" evidence="11">
    <conflict type="frameshift">
        <sequence resource="EMBL-CDS" id="BAB86300"/>
    </conflict>
</comment>
<accession>Q8C145</accession>
<accession>Q7TPP9</accession>
<accession>Q7TQE0</accession>
<accession>Q8R518</accession>
<sequence length="765" mass="86380">MATDLSVIMILTFALWVTSPLHELQSTAAFSQTTEKINSNWEPGVNVDLAVTMQRHHLQQLFYRYGENDSLSVEGFRKLLQNIGIDKIKRVHIHHDHEHHADHEHHSDHEHHSDHEHHSDHEHHSDHEHHSDHEHHSHRSHTVAGKNNRKAFCPDLDSDNSGKNPRTSLGKGSRPAEHMNGRRNIKESASSSEVTSAVYNAVSEGTRFVETIETPKPGRRTKDVNPSTPPSITEKSRVGRLSRLARKKSNESVSEPRKSFMYSRNTNDNIQECFNTTKLLTSHGMSIQALLNATEFNYLCPAIINQIDARACLIHTASEKKAEIPPKTYSLQIAWLGGFIAISIISFLSLLGVILVPLMNRVFFKFLLSFLVALAVGTLSGDALLHLLPHSHASHQHSHSHEEPAMEMKRGPLFSHLSAQNIEESSYFDSTWKGLTALGGLYFMFLVEHVLTLIKQFKDKKKKNQKKPENDEDVESKKQLSKYDSQLSSNEEKVDPGERPESYLRADSQEPSPFDSQQPTMLEEEEVMIAHAHPQEVYNEYVPRGCKNKCHSHFHDTLGQSDDLIHHHHDYHHILHHHHHQNHHPHSHSQRYSREELKDAGIATLAWMVIMGDGLHNFSDGLAIGAAFTEGLSSGLSTSVAVFCHELPHELGDFAVLLKAGMTVKQAVLYNALSAMLAYLGMATGIFIGHYAENVSMWIFALTAGLFMYVALVDMVPEMLHNDASDHGCSRWGYFFLQNAGILLGFGIMLLISIFEHKIVFRINF</sequence>
<keyword id="KW-1003">Cell membrane</keyword>
<keyword id="KW-0966">Cell projection</keyword>
<keyword id="KW-0175">Coiled coil</keyword>
<keyword id="KW-0325">Glycoprotein</keyword>
<keyword id="KW-0406">Ion transport</keyword>
<keyword id="KW-0472">Membrane</keyword>
<keyword id="KW-0597">Phosphoprotein</keyword>
<keyword id="KW-1185">Reference proteome</keyword>
<keyword id="KW-0732">Signal</keyword>
<keyword id="KW-0812">Transmembrane</keyword>
<keyword id="KW-1133">Transmembrane helix</keyword>
<keyword id="KW-0813">Transport</keyword>
<keyword id="KW-0862">Zinc</keyword>
<keyword id="KW-0864">Zinc transport</keyword>
<proteinExistence type="evidence at protein level"/>